<dbReference type="EC" id="4.1.1.39" evidence="1"/>
<dbReference type="EMBL" id="L14407">
    <property type="protein sequence ID" value="AAA19770.1"/>
    <property type="molecule type" value="Genomic_DNA"/>
</dbReference>
<dbReference type="GO" id="GO:0009507">
    <property type="term" value="C:chloroplast"/>
    <property type="evidence" value="ECO:0007669"/>
    <property type="project" value="UniProtKB-SubCell"/>
</dbReference>
<dbReference type="GO" id="GO:0000287">
    <property type="term" value="F:magnesium ion binding"/>
    <property type="evidence" value="ECO:0007669"/>
    <property type="project" value="InterPro"/>
</dbReference>
<dbReference type="GO" id="GO:0004497">
    <property type="term" value="F:monooxygenase activity"/>
    <property type="evidence" value="ECO:0007669"/>
    <property type="project" value="UniProtKB-KW"/>
</dbReference>
<dbReference type="GO" id="GO:0016984">
    <property type="term" value="F:ribulose-bisphosphate carboxylase activity"/>
    <property type="evidence" value="ECO:0007669"/>
    <property type="project" value="UniProtKB-EC"/>
</dbReference>
<dbReference type="GO" id="GO:0009853">
    <property type="term" value="P:photorespiration"/>
    <property type="evidence" value="ECO:0007669"/>
    <property type="project" value="UniProtKB-KW"/>
</dbReference>
<dbReference type="GO" id="GO:0019253">
    <property type="term" value="P:reductive pentose-phosphate cycle"/>
    <property type="evidence" value="ECO:0007669"/>
    <property type="project" value="UniProtKB-KW"/>
</dbReference>
<dbReference type="CDD" id="cd08212">
    <property type="entry name" value="RuBisCO_large_I"/>
    <property type="match status" value="1"/>
</dbReference>
<dbReference type="FunFam" id="3.20.20.110:FF:000001">
    <property type="entry name" value="Ribulose bisphosphate carboxylase large chain"/>
    <property type="match status" value="1"/>
</dbReference>
<dbReference type="FunFam" id="3.30.70.150:FF:000001">
    <property type="entry name" value="Ribulose bisphosphate carboxylase large chain"/>
    <property type="match status" value="1"/>
</dbReference>
<dbReference type="Gene3D" id="3.20.20.110">
    <property type="entry name" value="Ribulose bisphosphate carboxylase, large subunit, C-terminal domain"/>
    <property type="match status" value="1"/>
</dbReference>
<dbReference type="Gene3D" id="3.30.70.150">
    <property type="entry name" value="RuBisCO large subunit, N-terminal domain"/>
    <property type="match status" value="1"/>
</dbReference>
<dbReference type="HAMAP" id="MF_01338">
    <property type="entry name" value="RuBisCO_L_type1"/>
    <property type="match status" value="1"/>
</dbReference>
<dbReference type="InterPro" id="IPR033966">
    <property type="entry name" value="RuBisCO"/>
</dbReference>
<dbReference type="InterPro" id="IPR020878">
    <property type="entry name" value="RuBisCo_large_chain_AS"/>
</dbReference>
<dbReference type="InterPro" id="IPR000685">
    <property type="entry name" value="RuBisCO_lsu_C"/>
</dbReference>
<dbReference type="InterPro" id="IPR036376">
    <property type="entry name" value="RuBisCO_lsu_C_sf"/>
</dbReference>
<dbReference type="InterPro" id="IPR017443">
    <property type="entry name" value="RuBisCO_lsu_fd_N"/>
</dbReference>
<dbReference type="InterPro" id="IPR036422">
    <property type="entry name" value="RuBisCO_lsu_N_sf"/>
</dbReference>
<dbReference type="InterPro" id="IPR020888">
    <property type="entry name" value="RuBisCO_lsuI"/>
</dbReference>
<dbReference type="NCBIfam" id="NF003252">
    <property type="entry name" value="PRK04208.1"/>
    <property type="match status" value="1"/>
</dbReference>
<dbReference type="PANTHER" id="PTHR42704">
    <property type="entry name" value="RIBULOSE BISPHOSPHATE CARBOXYLASE"/>
    <property type="match status" value="1"/>
</dbReference>
<dbReference type="PANTHER" id="PTHR42704:SF15">
    <property type="entry name" value="RIBULOSE BISPHOSPHATE CARBOXYLASE LARGE CHAIN"/>
    <property type="match status" value="1"/>
</dbReference>
<dbReference type="Pfam" id="PF00016">
    <property type="entry name" value="RuBisCO_large"/>
    <property type="match status" value="1"/>
</dbReference>
<dbReference type="Pfam" id="PF02788">
    <property type="entry name" value="RuBisCO_large_N"/>
    <property type="match status" value="1"/>
</dbReference>
<dbReference type="SFLD" id="SFLDG01052">
    <property type="entry name" value="RuBisCO"/>
    <property type="match status" value="1"/>
</dbReference>
<dbReference type="SFLD" id="SFLDS00014">
    <property type="entry name" value="RuBisCO"/>
    <property type="match status" value="1"/>
</dbReference>
<dbReference type="SFLD" id="SFLDG00301">
    <property type="entry name" value="RuBisCO-like_proteins"/>
    <property type="match status" value="1"/>
</dbReference>
<dbReference type="SUPFAM" id="SSF51649">
    <property type="entry name" value="RuBisCo, C-terminal domain"/>
    <property type="match status" value="1"/>
</dbReference>
<dbReference type="SUPFAM" id="SSF54966">
    <property type="entry name" value="RuBisCO, large subunit, small (N-terminal) domain"/>
    <property type="match status" value="1"/>
</dbReference>
<dbReference type="PROSITE" id="PS00157">
    <property type="entry name" value="RUBISCO_LARGE"/>
    <property type="match status" value="1"/>
</dbReference>
<feature type="chain" id="PRO_0000062584" description="Ribulose bisphosphate carboxylase large chain">
    <location>
        <begin position="1" status="less than"/>
        <end position="468"/>
    </location>
</feature>
<feature type="active site" description="Proton acceptor" evidence="1">
    <location>
        <position position="166"/>
    </location>
</feature>
<feature type="active site" description="Proton acceptor" evidence="1">
    <location>
        <position position="285"/>
    </location>
</feature>
<feature type="binding site" description="in homodimeric partner" evidence="1">
    <location>
        <position position="114"/>
    </location>
    <ligand>
        <name>substrate</name>
    </ligand>
</feature>
<feature type="binding site" evidence="1">
    <location>
        <position position="164"/>
    </location>
    <ligand>
        <name>substrate</name>
    </ligand>
</feature>
<feature type="binding site" evidence="1">
    <location>
        <position position="168"/>
    </location>
    <ligand>
        <name>substrate</name>
    </ligand>
</feature>
<feature type="binding site" description="via carbamate group" evidence="1">
    <location>
        <position position="192"/>
    </location>
    <ligand>
        <name>Mg(2+)</name>
        <dbReference type="ChEBI" id="CHEBI:18420"/>
    </ligand>
</feature>
<feature type="binding site" evidence="1">
    <location>
        <position position="194"/>
    </location>
    <ligand>
        <name>Mg(2+)</name>
        <dbReference type="ChEBI" id="CHEBI:18420"/>
    </ligand>
</feature>
<feature type="binding site" evidence="1">
    <location>
        <position position="195"/>
    </location>
    <ligand>
        <name>Mg(2+)</name>
        <dbReference type="ChEBI" id="CHEBI:18420"/>
    </ligand>
</feature>
<feature type="binding site" evidence="1">
    <location>
        <position position="286"/>
    </location>
    <ligand>
        <name>substrate</name>
    </ligand>
</feature>
<feature type="binding site" evidence="1">
    <location>
        <position position="318"/>
    </location>
    <ligand>
        <name>substrate</name>
    </ligand>
</feature>
<feature type="binding site" evidence="1">
    <location>
        <position position="370"/>
    </location>
    <ligand>
        <name>substrate</name>
    </ligand>
</feature>
<feature type="site" description="Transition state stabilizer" evidence="1">
    <location>
        <position position="325"/>
    </location>
</feature>
<feature type="modified residue" description="N6,N6,N6-trimethyllysine" evidence="1">
    <location>
        <position position="5"/>
    </location>
</feature>
<feature type="modified residue" description="N6-carboxylysine" evidence="1">
    <location>
        <position position="192"/>
    </location>
</feature>
<feature type="disulfide bond" description="Interchain; in linked form" evidence="1">
    <location>
        <position position="238"/>
    </location>
</feature>
<feature type="non-terminal residue">
    <location>
        <position position="1"/>
    </location>
</feature>
<sequence>SVGFKAGVKEYKLTYYTPEYETKDTDILAAFRVTPQPGVPPEEAGXAVAAESSTGTWTTVWTDGLTSLDRYKGRCYHIEPVPGEKDQYXXYVAYPLDLFEEGSVTNMFTSIVGNVFGFKALRALRLEDLRIPTAYIKTFQGPPHGIQVERDKLNKYGRPLLGCTIKPKLGLSAKNYGRAVYECLRGGLDFTKDDENVNSQPFMRWRDRFLFCAEAIYKSQAETGEIKGHYLNATAGTCEEMMKRAVFARELGVPIVMHDYLTGGFTANTSLAHYCRDNGLLLHIHRAMHAVIDRQKNHGMTFRVLRKALRLSGGDHIHAGTVVGKLEGERDITLGFVDLLRDDFVEKDRSRGIYFTQDWVSLPGVIPVASGGIHVWHMPALTEIFGDDSVLQFGGGTLGHPWGNAPGAVANRVALEACVLARNEGRDLAAEGNAIIREACKWSPELAAACEVWKEIKFEFKAVDTLDK</sequence>
<gene>
    <name evidence="1" type="primary">rbcL</name>
</gene>
<name>RBL_SALDI</name>
<accession>P36485</accession>
<keyword id="KW-0113">Calvin cycle</keyword>
<keyword id="KW-0120">Carbon dioxide fixation</keyword>
<keyword id="KW-0150">Chloroplast</keyword>
<keyword id="KW-1015">Disulfide bond</keyword>
<keyword id="KW-0456">Lyase</keyword>
<keyword id="KW-0460">Magnesium</keyword>
<keyword id="KW-0479">Metal-binding</keyword>
<keyword id="KW-0488">Methylation</keyword>
<keyword id="KW-0503">Monooxygenase</keyword>
<keyword id="KW-0560">Oxidoreductase</keyword>
<keyword id="KW-0601">Photorespiration</keyword>
<keyword id="KW-0602">Photosynthesis</keyword>
<keyword id="KW-0934">Plastid</keyword>
<organism>
    <name type="scientific">Salvia divinorum</name>
    <name type="common">Maria pastora</name>
    <name type="synonym">Diviner's sage</name>
    <dbReference type="NCBI Taxonomy" id="28513"/>
    <lineage>
        <taxon>Eukaryota</taxon>
        <taxon>Viridiplantae</taxon>
        <taxon>Streptophyta</taxon>
        <taxon>Embryophyta</taxon>
        <taxon>Tracheophyta</taxon>
        <taxon>Spermatophyta</taxon>
        <taxon>Magnoliopsida</taxon>
        <taxon>eudicotyledons</taxon>
        <taxon>Gunneridae</taxon>
        <taxon>Pentapetalae</taxon>
        <taxon>asterids</taxon>
        <taxon>lamiids</taxon>
        <taxon>Lamiales</taxon>
        <taxon>Lamiaceae</taxon>
        <taxon>Nepetoideae</taxon>
        <taxon>Mentheae</taxon>
        <taxon>Salviinae</taxon>
        <taxon>Salvia</taxon>
        <taxon>Salvia subgen. Calosphace</taxon>
    </lineage>
</organism>
<evidence type="ECO:0000255" key="1">
    <source>
        <dbReference type="HAMAP-Rule" id="MF_01338"/>
    </source>
</evidence>
<proteinExistence type="inferred from homology"/>
<reference key="1">
    <citation type="journal article" date="1993" name="Ann. Mo. Bot. Gard.">
        <title>A parsimony analysis of the Asteridae sensu lato based on rbcL sequences.</title>
        <authorList>
            <person name="Olmstead R.G."/>
            <person name="Bremer B."/>
            <person name="Scott K.M."/>
            <person name="Palmer J.D."/>
        </authorList>
        <dbReference type="AGRICOLA" id="IND93053816"/>
    </citation>
    <scope>NUCLEOTIDE SEQUENCE [GENOMIC DNA]</scope>
</reference>
<comment type="function">
    <text evidence="1">RuBisCO catalyzes two reactions: the carboxylation of D-ribulose 1,5-bisphosphate, the primary event in carbon dioxide fixation, as well as the oxidative fragmentation of the pentose substrate in the photorespiration process. Both reactions occur simultaneously and in competition at the same active site.</text>
</comment>
<comment type="catalytic activity">
    <reaction evidence="1">
        <text>2 (2R)-3-phosphoglycerate + 2 H(+) = D-ribulose 1,5-bisphosphate + CO2 + H2O</text>
        <dbReference type="Rhea" id="RHEA:23124"/>
        <dbReference type="ChEBI" id="CHEBI:15377"/>
        <dbReference type="ChEBI" id="CHEBI:15378"/>
        <dbReference type="ChEBI" id="CHEBI:16526"/>
        <dbReference type="ChEBI" id="CHEBI:57870"/>
        <dbReference type="ChEBI" id="CHEBI:58272"/>
        <dbReference type="EC" id="4.1.1.39"/>
    </reaction>
</comment>
<comment type="catalytic activity">
    <reaction evidence="1">
        <text>D-ribulose 1,5-bisphosphate + O2 = 2-phosphoglycolate + (2R)-3-phosphoglycerate + 2 H(+)</text>
        <dbReference type="Rhea" id="RHEA:36631"/>
        <dbReference type="ChEBI" id="CHEBI:15378"/>
        <dbReference type="ChEBI" id="CHEBI:15379"/>
        <dbReference type="ChEBI" id="CHEBI:57870"/>
        <dbReference type="ChEBI" id="CHEBI:58033"/>
        <dbReference type="ChEBI" id="CHEBI:58272"/>
    </reaction>
</comment>
<comment type="cofactor">
    <cofactor evidence="1">
        <name>Mg(2+)</name>
        <dbReference type="ChEBI" id="CHEBI:18420"/>
    </cofactor>
    <text evidence="1">Binds 1 Mg(2+) ion per subunit.</text>
</comment>
<comment type="subunit">
    <text evidence="1">Heterohexadecamer of 8 large chains and 8 small chains; disulfide-linked. The disulfide link is formed within the large subunit homodimers.</text>
</comment>
<comment type="subcellular location">
    <subcellularLocation>
        <location>Plastid</location>
        <location>Chloroplast</location>
    </subcellularLocation>
</comment>
<comment type="PTM">
    <text evidence="1">The disulfide bond which can form in the large chain dimeric partners within the hexadecamer appears to be associated with oxidative stress and protein turnover.</text>
</comment>
<comment type="miscellaneous">
    <text evidence="1">The basic functional RuBisCO is composed of a large chain homodimer in a 'head-to-tail' conformation. In form I RuBisCO this homodimer is arranged in a barrel-like tetramer with the small subunits forming a tetrameric 'cap' on each end of the 'barrel'.</text>
</comment>
<comment type="similarity">
    <text evidence="1">Belongs to the RuBisCO large chain family. Type I subfamily.</text>
</comment>
<protein>
    <recommendedName>
        <fullName evidence="1">Ribulose bisphosphate carboxylase large chain</fullName>
        <shortName evidence="1">RuBisCO large subunit</shortName>
        <ecNumber evidence="1">4.1.1.39</ecNumber>
    </recommendedName>
</protein>
<geneLocation type="chloroplast"/>